<gene>
    <name evidence="1" type="primary">prs</name>
    <name type="synonym">prsA</name>
    <name type="ordered locus">CBU_1830</name>
</gene>
<organism>
    <name type="scientific">Coxiella burnetii (strain RSA 493 / Nine Mile phase I)</name>
    <dbReference type="NCBI Taxonomy" id="227377"/>
    <lineage>
        <taxon>Bacteria</taxon>
        <taxon>Pseudomonadati</taxon>
        <taxon>Pseudomonadota</taxon>
        <taxon>Gammaproteobacteria</taxon>
        <taxon>Legionellales</taxon>
        <taxon>Coxiellaceae</taxon>
        <taxon>Coxiella</taxon>
    </lineage>
</organism>
<sequence length="319" mass="35221">MPNVDDIRIFHGSANPSLAENVAKELNTTIGNALISRFSDGEIRFEIEENVRGRDIYLIQSTGHPTNEHVMELILMGDAFRRASAASITAVVPYFGYARQDRRVRSSRVPISAKVVADMMQKVGFSRLITVDLHADQIQGFFYMPVDNIYASITALEEYRLLDKLETPMIVSPDVGGVVRARAIAKRLNDSDLAIIDKRRPAPNQAEVMNVIGNVQNRHCVIVDDIVDTAGTLCHAASALKEKGALTVSSYCTHPVLSGNAVKNIMDSDIDELIVTDTIPLHEEAAKCRKITQISLSRLIAETISRINQKESVSSMFLD</sequence>
<dbReference type="EC" id="2.7.6.1" evidence="1"/>
<dbReference type="EMBL" id="AE016828">
    <property type="protein sequence ID" value="AAO91323.1"/>
    <property type="molecule type" value="Genomic_DNA"/>
</dbReference>
<dbReference type="RefSeq" id="NP_820809.1">
    <property type="nucleotide sequence ID" value="NC_002971.3"/>
</dbReference>
<dbReference type="RefSeq" id="WP_005770178.1">
    <property type="nucleotide sequence ID" value="NZ_CCYB01000008.1"/>
</dbReference>
<dbReference type="SMR" id="Q83AQ1"/>
<dbReference type="STRING" id="227377.CBU_1830"/>
<dbReference type="DNASU" id="1209742"/>
<dbReference type="EnsemblBacteria" id="AAO91323">
    <property type="protein sequence ID" value="AAO91323"/>
    <property type="gene ID" value="CBU_1830"/>
</dbReference>
<dbReference type="GeneID" id="1209742"/>
<dbReference type="KEGG" id="cbu:CBU_1830"/>
<dbReference type="PATRIC" id="fig|227377.7.peg.1814"/>
<dbReference type="eggNOG" id="COG0462">
    <property type="taxonomic scope" value="Bacteria"/>
</dbReference>
<dbReference type="HOGENOM" id="CLU_033546_2_0_6"/>
<dbReference type="OrthoDB" id="9777067at2"/>
<dbReference type="UniPathway" id="UPA00087">
    <property type="reaction ID" value="UER00172"/>
</dbReference>
<dbReference type="Proteomes" id="UP000002671">
    <property type="component" value="Chromosome"/>
</dbReference>
<dbReference type="GO" id="GO:0005737">
    <property type="term" value="C:cytoplasm"/>
    <property type="evidence" value="ECO:0000318"/>
    <property type="project" value="GO_Central"/>
</dbReference>
<dbReference type="GO" id="GO:0002189">
    <property type="term" value="C:ribose phosphate diphosphokinase complex"/>
    <property type="evidence" value="ECO:0000318"/>
    <property type="project" value="GO_Central"/>
</dbReference>
<dbReference type="GO" id="GO:0005524">
    <property type="term" value="F:ATP binding"/>
    <property type="evidence" value="ECO:0007669"/>
    <property type="project" value="UniProtKB-KW"/>
</dbReference>
<dbReference type="GO" id="GO:0016301">
    <property type="term" value="F:kinase activity"/>
    <property type="evidence" value="ECO:0007669"/>
    <property type="project" value="UniProtKB-KW"/>
</dbReference>
<dbReference type="GO" id="GO:0000287">
    <property type="term" value="F:magnesium ion binding"/>
    <property type="evidence" value="ECO:0007669"/>
    <property type="project" value="UniProtKB-UniRule"/>
</dbReference>
<dbReference type="GO" id="GO:0004749">
    <property type="term" value="F:ribose phosphate diphosphokinase activity"/>
    <property type="evidence" value="ECO:0000318"/>
    <property type="project" value="GO_Central"/>
</dbReference>
<dbReference type="GO" id="GO:0006015">
    <property type="term" value="P:5-phosphoribose 1-diphosphate biosynthetic process"/>
    <property type="evidence" value="ECO:0000318"/>
    <property type="project" value="GO_Central"/>
</dbReference>
<dbReference type="GO" id="GO:0006164">
    <property type="term" value="P:purine nucleotide biosynthetic process"/>
    <property type="evidence" value="ECO:0000318"/>
    <property type="project" value="GO_Central"/>
</dbReference>
<dbReference type="GO" id="GO:0009156">
    <property type="term" value="P:ribonucleoside monophosphate biosynthetic process"/>
    <property type="evidence" value="ECO:0007669"/>
    <property type="project" value="InterPro"/>
</dbReference>
<dbReference type="CDD" id="cd06223">
    <property type="entry name" value="PRTases_typeI"/>
    <property type="match status" value="1"/>
</dbReference>
<dbReference type="FunFam" id="3.40.50.2020:FF:000001">
    <property type="entry name" value="Ribose-phosphate pyrophosphokinase"/>
    <property type="match status" value="1"/>
</dbReference>
<dbReference type="FunFam" id="3.40.50.2020:FF:000002">
    <property type="entry name" value="Ribose-phosphate pyrophosphokinase"/>
    <property type="match status" value="1"/>
</dbReference>
<dbReference type="Gene3D" id="3.40.50.2020">
    <property type="match status" value="2"/>
</dbReference>
<dbReference type="HAMAP" id="MF_00583_B">
    <property type="entry name" value="RibP_PPkinase_B"/>
    <property type="match status" value="1"/>
</dbReference>
<dbReference type="InterPro" id="IPR000842">
    <property type="entry name" value="PRib_PP_synth_CS"/>
</dbReference>
<dbReference type="InterPro" id="IPR029099">
    <property type="entry name" value="Pribosyltran_N"/>
</dbReference>
<dbReference type="InterPro" id="IPR000836">
    <property type="entry name" value="PRibTrfase_dom"/>
</dbReference>
<dbReference type="InterPro" id="IPR029057">
    <property type="entry name" value="PRTase-like"/>
</dbReference>
<dbReference type="InterPro" id="IPR005946">
    <property type="entry name" value="Rib-P_diPkinase"/>
</dbReference>
<dbReference type="InterPro" id="IPR037515">
    <property type="entry name" value="Rib-P_diPkinase_bac"/>
</dbReference>
<dbReference type="NCBIfam" id="NF002320">
    <property type="entry name" value="PRK01259.1"/>
    <property type="match status" value="1"/>
</dbReference>
<dbReference type="NCBIfam" id="TIGR01251">
    <property type="entry name" value="ribP_PPkin"/>
    <property type="match status" value="1"/>
</dbReference>
<dbReference type="PANTHER" id="PTHR10210">
    <property type="entry name" value="RIBOSE-PHOSPHATE DIPHOSPHOKINASE FAMILY MEMBER"/>
    <property type="match status" value="1"/>
</dbReference>
<dbReference type="PANTHER" id="PTHR10210:SF41">
    <property type="entry name" value="RIBOSE-PHOSPHATE PYROPHOSPHOKINASE 1, CHLOROPLASTIC"/>
    <property type="match status" value="1"/>
</dbReference>
<dbReference type="Pfam" id="PF14572">
    <property type="entry name" value="Pribosyl_synth"/>
    <property type="match status" value="1"/>
</dbReference>
<dbReference type="Pfam" id="PF13793">
    <property type="entry name" value="Pribosyltran_N"/>
    <property type="match status" value="1"/>
</dbReference>
<dbReference type="SMART" id="SM01400">
    <property type="entry name" value="Pribosyltran_N"/>
    <property type="match status" value="1"/>
</dbReference>
<dbReference type="SUPFAM" id="SSF53271">
    <property type="entry name" value="PRTase-like"/>
    <property type="match status" value="1"/>
</dbReference>
<dbReference type="PROSITE" id="PS00114">
    <property type="entry name" value="PRPP_SYNTHASE"/>
    <property type="match status" value="1"/>
</dbReference>
<feature type="chain" id="PRO_0000141132" description="Ribose-phosphate pyrophosphokinase">
    <location>
        <begin position="1"/>
        <end position="319"/>
    </location>
</feature>
<feature type="active site" evidence="1">
    <location>
        <position position="198"/>
    </location>
</feature>
<feature type="binding site" evidence="1">
    <location>
        <begin position="40"/>
        <end position="42"/>
    </location>
    <ligand>
        <name>ATP</name>
        <dbReference type="ChEBI" id="CHEBI:30616"/>
    </ligand>
</feature>
<feature type="binding site" evidence="1">
    <location>
        <begin position="99"/>
        <end position="100"/>
    </location>
    <ligand>
        <name>ATP</name>
        <dbReference type="ChEBI" id="CHEBI:30616"/>
    </ligand>
</feature>
<feature type="binding site" evidence="1">
    <location>
        <position position="134"/>
    </location>
    <ligand>
        <name>Mg(2+)</name>
        <dbReference type="ChEBI" id="CHEBI:18420"/>
        <label>1</label>
    </ligand>
</feature>
<feature type="binding site" evidence="1">
    <location>
        <position position="174"/>
    </location>
    <ligand>
        <name>Mg(2+)</name>
        <dbReference type="ChEBI" id="CHEBI:18420"/>
        <label>2</label>
    </ligand>
</feature>
<feature type="binding site" evidence="1">
    <location>
        <position position="200"/>
    </location>
    <ligand>
        <name>D-ribose 5-phosphate</name>
        <dbReference type="ChEBI" id="CHEBI:78346"/>
    </ligand>
</feature>
<feature type="binding site" evidence="1">
    <location>
        <position position="224"/>
    </location>
    <ligand>
        <name>D-ribose 5-phosphate</name>
        <dbReference type="ChEBI" id="CHEBI:78346"/>
    </ligand>
</feature>
<feature type="binding site" evidence="1">
    <location>
        <begin position="228"/>
        <end position="232"/>
    </location>
    <ligand>
        <name>D-ribose 5-phosphate</name>
        <dbReference type="ChEBI" id="CHEBI:78346"/>
    </ligand>
</feature>
<keyword id="KW-0067">ATP-binding</keyword>
<keyword id="KW-0963">Cytoplasm</keyword>
<keyword id="KW-0418">Kinase</keyword>
<keyword id="KW-0460">Magnesium</keyword>
<keyword id="KW-0479">Metal-binding</keyword>
<keyword id="KW-0545">Nucleotide biosynthesis</keyword>
<keyword id="KW-0547">Nucleotide-binding</keyword>
<keyword id="KW-1185">Reference proteome</keyword>
<keyword id="KW-0808">Transferase</keyword>
<protein>
    <recommendedName>
        <fullName evidence="1">Ribose-phosphate pyrophosphokinase</fullName>
        <shortName evidence="1">RPPK</shortName>
        <ecNumber evidence="1">2.7.6.1</ecNumber>
    </recommendedName>
    <alternativeName>
        <fullName evidence="1">5-phospho-D-ribosyl alpha-1-diphosphate synthase</fullName>
    </alternativeName>
    <alternativeName>
        <fullName evidence="1">Phosphoribosyl diphosphate synthase</fullName>
    </alternativeName>
    <alternativeName>
        <fullName evidence="1">Phosphoribosyl pyrophosphate synthase</fullName>
        <shortName evidence="1">P-Rib-PP synthase</shortName>
        <shortName evidence="1">PRPP synthase</shortName>
        <shortName evidence="1">PRPPase</shortName>
    </alternativeName>
</protein>
<evidence type="ECO:0000255" key="1">
    <source>
        <dbReference type="HAMAP-Rule" id="MF_00583"/>
    </source>
</evidence>
<evidence type="ECO:0000305" key="2"/>
<comment type="function">
    <text evidence="1">Involved in the biosynthesis of the central metabolite phospho-alpha-D-ribosyl-1-pyrophosphate (PRPP) via the transfer of pyrophosphoryl group from ATP to 1-hydroxyl of ribose-5-phosphate (Rib-5-P).</text>
</comment>
<comment type="catalytic activity">
    <reaction evidence="1">
        <text>D-ribose 5-phosphate + ATP = 5-phospho-alpha-D-ribose 1-diphosphate + AMP + H(+)</text>
        <dbReference type="Rhea" id="RHEA:15609"/>
        <dbReference type="ChEBI" id="CHEBI:15378"/>
        <dbReference type="ChEBI" id="CHEBI:30616"/>
        <dbReference type="ChEBI" id="CHEBI:58017"/>
        <dbReference type="ChEBI" id="CHEBI:78346"/>
        <dbReference type="ChEBI" id="CHEBI:456215"/>
        <dbReference type="EC" id="2.7.6.1"/>
    </reaction>
</comment>
<comment type="cofactor">
    <cofactor evidence="1">
        <name>Mg(2+)</name>
        <dbReference type="ChEBI" id="CHEBI:18420"/>
    </cofactor>
    <text evidence="1">Binds 2 Mg(2+) ions per subunit.</text>
</comment>
<comment type="pathway">
    <text evidence="1">Metabolic intermediate biosynthesis; 5-phospho-alpha-D-ribose 1-diphosphate biosynthesis; 5-phospho-alpha-D-ribose 1-diphosphate from D-ribose 5-phosphate (route I): step 1/1.</text>
</comment>
<comment type="subunit">
    <text evidence="1">Homohexamer.</text>
</comment>
<comment type="subcellular location">
    <subcellularLocation>
        <location evidence="1">Cytoplasm</location>
    </subcellularLocation>
</comment>
<comment type="similarity">
    <text evidence="1">Belongs to the ribose-phosphate pyrophosphokinase family. Class I subfamily.</text>
</comment>
<comment type="caution">
    <text evidence="2">Tyr-143 is present instead of the conserved Asp which is expected to be a magnesium-binding residue.</text>
</comment>
<accession>Q83AQ1</accession>
<name>KPRS_COXBU</name>
<reference key="1">
    <citation type="journal article" date="2003" name="Proc. Natl. Acad. Sci. U.S.A.">
        <title>Complete genome sequence of the Q-fever pathogen, Coxiella burnetii.</title>
        <authorList>
            <person name="Seshadri R."/>
            <person name="Paulsen I.T."/>
            <person name="Eisen J.A."/>
            <person name="Read T.D."/>
            <person name="Nelson K.E."/>
            <person name="Nelson W.C."/>
            <person name="Ward N.L."/>
            <person name="Tettelin H."/>
            <person name="Davidsen T.M."/>
            <person name="Beanan M.J."/>
            <person name="DeBoy R.T."/>
            <person name="Daugherty S.C."/>
            <person name="Brinkac L.M."/>
            <person name="Madupu R."/>
            <person name="Dodson R.J."/>
            <person name="Khouri H.M."/>
            <person name="Lee K.H."/>
            <person name="Carty H.A."/>
            <person name="Scanlan D."/>
            <person name="Heinzen R.A."/>
            <person name="Thompson H.A."/>
            <person name="Samuel J.E."/>
            <person name="Fraser C.M."/>
            <person name="Heidelberg J.F."/>
        </authorList>
    </citation>
    <scope>NUCLEOTIDE SEQUENCE [LARGE SCALE GENOMIC DNA]</scope>
    <source>
        <strain>RSA 493 / Nine Mile phase I</strain>
    </source>
</reference>
<proteinExistence type="inferred from homology"/>